<name>ADAM9_MOUSE</name>
<keyword id="KW-1003">Cell membrane</keyword>
<keyword id="KW-0903">Direct protein sequencing</keyword>
<keyword id="KW-1015">Disulfide bond</keyword>
<keyword id="KW-0245">EGF-like domain</keyword>
<keyword id="KW-0325">Glycoprotein</keyword>
<keyword id="KW-0378">Hydrolase</keyword>
<keyword id="KW-0472">Membrane</keyword>
<keyword id="KW-0479">Metal-binding</keyword>
<keyword id="KW-0482">Metalloprotease</keyword>
<keyword id="KW-0597">Phosphoprotein</keyword>
<keyword id="KW-0645">Protease</keyword>
<keyword id="KW-1185">Reference proteome</keyword>
<keyword id="KW-0732">Signal</keyword>
<keyword id="KW-0812">Transmembrane</keyword>
<keyword id="KW-1133">Transmembrane helix</keyword>
<keyword id="KW-0862">Zinc</keyword>
<keyword id="KW-0865">Zymogen</keyword>
<proteinExistence type="evidence at protein level"/>
<organism>
    <name type="scientific">Mus musculus</name>
    <name type="common">Mouse</name>
    <dbReference type="NCBI Taxonomy" id="10090"/>
    <lineage>
        <taxon>Eukaryota</taxon>
        <taxon>Metazoa</taxon>
        <taxon>Chordata</taxon>
        <taxon>Craniata</taxon>
        <taxon>Vertebrata</taxon>
        <taxon>Euteleostomi</taxon>
        <taxon>Mammalia</taxon>
        <taxon>Eutheria</taxon>
        <taxon>Euarchontoglires</taxon>
        <taxon>Glires</taxon>
        <taxon>Rodentia</taxon>
        <taxon>Myomorpha</taxon>
        <taxon>Muroidea</taxon>
        <taxon>Muridae</taxon>
        <taxon>Murinae</taxon>
        <taxon>Mus</taxon>
        <taxon>Mus</taxon>
    </lineage>
</organism>
<dbReference type="EC" id="3.4.24.-" evidence="16"/>
<dbReference type="EMBL" id="U41765">
    <property type="protein sequence ID" value="AAC52446.1"/>
    <property type="molecule type" value="mRNA"/>
</dbReference>
<dbReference type="EMBL" id="AK122188">
    <property type="protein sequence ID" value="BAC65470.1"/>
    <property type="status" value="ALT_INIT"/>
    <property type="molecule type" value="mRNA"/>
</dbReference>
<dbReference type="EMBL" id="AC156553">
    <property type="status" value="NOT_ANNOTATED_CDS"/>
    <property type="molecule type" value="Genomic_DNA"/>
</dbReference>
<dbReference type="EMBL" id="BC047156">
    <property type="protein sequence ID" value="AAH47156.1"/>
    <property type="molecule type" value="mRNA"/>
</dbReference>
<dbReference type="EMBL" id="D50412">
    <property type="protein sequence ID" value="BAA08913.1"/>
    <property type="molecule type" value="mRNA"/>
</dbReference>
<dbReference type="EMBL" id="U06145">
    <property type="protein sequence ID" value="AAA18424.1"/>
    <property type="molecule type" value="mRNA"/>
</dbReference>
<dbReference type="PIR" id="I48943">
    <property type="entry name" value="I48943"/>
</dbReference>
<dbReference type="PIR" id="S60259">
    <property type="entry name" value="S60259"/>
</dbReference>
<dbReference type="RefSeq" id="NP_031430.2">
    <property type="nucleotide sequence ID" value="NM_007404.2"/>
</dbReference>
<dbReference type="SMR" id="Q61072"/>
<dbReference type="BioGRID" id="197973">
    <property type="interactions" value="2"/>
</dbReference>
<dbReference type="FunCoup" id="Q61072">
    <property type="interactions" value="908"/>
</dbReference>
<dbReference type="IntAct" id="Q61072">
    <property type="interactions" value="3"/>
</dbReference>
<dbReference type="STRING" id="10090.ENSMUSP00000146545"/>
<dbReference type="MEROPS" id="M12.209"/>
<dbReference type="GlyConnect" id="2260">
    <property type="glycosylation" value="4 N-Linked glycans (1 site)"/>
</dbReference>
<dbReference type="GlyCosmos" id="Q61072">
    <property type="glycosylation" value="6 sites, 4 glycans"/>
</dbReference>
<dbReference type="GlyGen" id="Q61072">
    <property type="glycosylation" value="7 sites, 8 N-linked glycans (4 sites)"/>
</dbReference>
<dbReference type="iPTMnet" id="Q61072"/>
<dbReference type="PhosphoSitePlus" id="Q61072"/>
<dbReference type="CPTAC" id="non-CPTAC-3443"/>
<dbReference type="PaxDb" id="10090-ENSMUSP00000081048"/>
<dbReference type="ProteomicsDB" id="285760"/>
<dbReference type="Pumba" id="Q61072"/>
<dbReference type="Antibodypedia" id="1281">
    <property type="antibodies" value="367 antibodies from 39 providers"/>
</dbReference>
<dbReference type="DNASU" id="11502"/>
<dbReference type="GeneID" id="11502"/>
<dbReference type="KEGG" id="mmu:11502"/>
<dbReference type="UCSC" id="uc009lfk.2">
    <property type="organism name" value="mouse"/>
</dbReference>
<dbReference type="AGR" id="MGI:105376"/>
<dbReference type="CTD" id="8754"/>
<dbReference type="MGI" id="MGI:105376">
    <property type="gene designation" value="Adam9"/>
</dbReference>
<dbReference type="VEuPathDB" id="HostDB:ENSMUSG00000031555"/>
<dbReference type="eggNOG" id="KOG3607">
    <property type="taxonomic scope" value="Eukaryota"/>
</dbReference>
<dbReference type="HOGENOM" id="CLU_012714_4_1_1"/>
<dbReference type="InParanoid" id="Q61072"/>
<dbReference type="OrthoDB" id="5951731at2759"/>
<dbReference type="PhylomeDB" id="Q61072"/>
<dbReference type="TreeFam" id="TF314733"/>
<dbReference type="BRENDA" id="3.4.24.B9">
    <property type="organism ID" value="3474"/>
</dbReference>
<dbReference type="BioGRID-ORCS" id="11502">
    <property type="hits" value="0 hits in 39 CRISPR screens"/>
</dbReference>
<dbReference type="ChiTaRS" id="Adam9">
    <property type="organism name" value="mouse"/>
</dbReference>
<dbReference type="PRO" id="PR:Q61072"/>
<dbReference type="Proteomes" id="UP000000589">
    <property type="component" value="Chromosome 8"/>
</dbReference>
<dbReference type="RNAct" id="Q61072">
    <property type="molecule type" value="protein"/>
</dbReference>
<dbReference type="Bgee" id="ENSMUSG00000031555">
    <property type="expression patterns" value="Expressed in endothelial cell of lymphatic vessel and 262 other cell types or tissues"/>
</dbReference>
<dbReference type="ExpressionAtlas" id="Q61072">
    <property type="expression patterns" value="baseline and differential"/>
</dbReference>
<dbReference type="GO" id="GO:0009986">
    <property type="term" value="C:cell surface"/>
    <property type="evidence" value="ECO:0000314"/>
    <property type="project" value="BHF-UCL"/>
</dbReference>
<dbReference type="GO" id="GO:0005737">
    <property type="term" value="C:cytoplasm"/>
    <property type="evidence" value="ECO:0000314"/>
    <property type="project" value="MGI"/>
</dbReference>
<dbReference type="GO" id="GO:0009897">
    <property type="term" value="C:external side of plasma membrane"/>
    <property type="evidence" value="ECO:0000314"/>
    <property type="project" value="BHF-UCL"/>
</dbReference>
<dbReference type="GO" id="GO:0005615">
    <property type="term" value="C:extracellular space"/>
    <property type="evidence" value="ECO:0000315"/>
    <property type="project" value="BHF-UCL"/>
</dbReference>
<dbReference type="GO" id="GO:0005886">
    <property type="term" value="C:plasma membrane"/>
    <property type="evidence" value="ECO:0000314"/>
    <property type="project" value="MGI"/>
</dbReference>
<dbReference type="GO" id="GO:0046872">
    <property type="term" value="F:metal ion binding"/>
    <property type="evidence" value="ECO:0007669"/>
    <property type="project" value="UniProtKB-KW"/>
</dbReference>
<dbReference type="GO" id="GO:0004222">
    <property type="term" value="F:metalloendopeptidase activity"/>
    <property type="evidence" value="ECO:0000314"/>
    <property type="project" value="BHF-UCL"/>
</dbReference>
<dbReference type="GO" id="GO:0005080">
    <property type="term" value="F:protein kinase C binding"/>
    <property type="evidence" value="ECO:0000353"/>
    <property type="project" value="BHF-UCL"/>
</dbReference>
<dbReference type="GO" id="GO:0017124">
    <property type="term" value="F:SH3 domain binding"/>
    <property type="evidence" value="ECO:0000314"/>
    <property type="project" value="BHF-UCL"/>
</dbReference>
<dbReference type="GO" id="GO:0033627">
    <property type="term" value="P:cell adhesion mediated by integrin"/>
    <property type="evidence" value="ECO:0000314"/>
    <property type="project" value="UniProtKB"/>
</dbReference>
<dbReference type="GO" id="GO:0016477">
    <property type="term" value="P:cell migration"/>
    <property type="evidence" value="ECO:0000314"/>
    <property type="project" value="UniProtKB"/>
</dbReference>
<dbReference type="GO" id="GO:0006509">
    <property type="term" value="P:membrane protein ectodomain proteolysis"/>
    <property type="evidence" value="ECO:0000314"/>
    <property type="project" value="UniProtKB"/>
</dbReference>
<dbReference type="GO" id="GO:0051044">
    <property type="term" value="P:positive regulation of membrane protein ectodomain proteolysis"/>
    <property type="evidence" value="ECO:0000314"/>
    <property type="project" value="BHF-UCL"/>
</dbReference>
<dbReference type="GO" id="GO:0051384">
    <property type="term" value="P:response to glucocorticoid"/>
    <property type="evidence" value="ECO:0000315"/>
    <property type="project" value="BHF-UCL"/>
</dbReference>
<dbReference type="GO" id="GO:0007179">
    <property type="term" value="P:transforming growth factor beta receptor signaling pathway"/>
    <property type="evidence" value="ECO:0000315"/>
    <property type="project" value="BHF-UCL"/>
</dbReference>
<dbReference type="CDD" id="cd04269">
    <property type="entry name" value="ZnMc_adamalysin_II_like"/>
    <property type="match status" value="1"/>
</dbReference>
<dbReference type="FunFam" id="3.40.390.10:FF:000002">
    <property type="entry name" value="Disintegrin and metalloproteinase domain-containing protein 22"/>
    <property type="match status" value="1"/>
</dbReference>
<dbReference type="FunFam" id="4.10.70.10:FF:000001">
    <property type="entry name" value="Disintegrin and metalloproteinase domain-containing protein 22"/>
    <property type="match status" value="1"/>
</dbReference>
<dbReference type="Gene3D" id="3.40.390.10">
    <property type="entry name" value="Collagenase (Catalytic Domain)"/>
    <property type="match status" value="1"/>
</dbReference>
<dbReference type="Gene3D" id="4.10.70.10">
    <property type="entry name" value="Disintegrin domain"/>
    <property type="match status" value="1"/>
</dbReference>
<dbReference type="InterPro" id="IPR006586">
    <property type="entry name" value="ADAM_Cys-rich"/>
</dbReference>
<dbReference type="InterPro" id="IPR018358">
    <property type="entry name" value="Disintegrin_CS"/>
</dbReference>
<dbReference type="InterPro" id="IPR001762">
    <property type="entry name" value="Disintegrin_dom"/>
</dbReference>
<dbReference type="InterPro" id="IPR036436">
    <property type="entry name" value="Disintegrin_dom_sf"/>
</dbReference>
<dbReference type="InterPro" id="IPR000742">
    <property type="entry name" value="EGF-like_dom"/>
</dbReference>
<dbReference type="InterPro" id="IPR024079">
    <property type="entry name" value="MetalloPept_cat_dom_sf"/>
</dbReference>
<dbReference type="InterPro" id="IPR001590">
    <property type="entry name" value="Peptidase_M12B"/>
</dbReference>
<dbReference type="InterPro" id="IPR002870">
    <property type="entry name" value="Peptidase_M12B_N"/>
</dbReference>
<dbReference type="InterPro" id="IPR034027">
    <property type="entry name" value="Reprolysin_adamalysin"/>
</dbReference>
<dbReference type="PANTHER" id="PTHR11905">
    <property type="entry name" value="ADAM A DISINTEGRIN AND METALLOPROTEASE DOMAIN"/>
    <property type="match status" value="1"/>
</dbReference>
<dbReference type="PANTHER" id="PTHR11905:SF136">
    <property type="entry name" value="DISINTEGRIN AND METALLOPROTEINASE DOMAIN-CONTAINING PROTEIN 9"/>
    <property type="match status" value="1"/>
</dbReference>
<dbReference type="Pfam" id="PF08516">
    <property type="entry name" value="ADAM_CR"/>
    <property type="match status" value="1"/>
</dbReference>
<dbReference type="Pfam" id="PF00200">
    <property type="entry name" value="Disintegrin"/>
    <property type="match status" value="1"/>
</dbReference>
<dbReference type="Pfam" id="PF01562">
    <property type="entry name" value="Pep_M12B_propep"/>
    <property type="match status" value="1"/>
</dbReference>
<dbReference type="Pfam" id="PF01421">
    <property type="entry name" value="Reprolysin"/>
    <property type="match status" value="1"/>
</dbReference>
<dbReference type="PRINTS" id="PR00289">
    <property type="entry name" value="DISINTEGRIN"/>
</dbReference>
<dbReference type="SMART" id="SM00608">
    <property type="entry name" value="ACR"/>
    <property type="match status" value="1"/>
</dbReference>
<dbReference type="SMART" id="SM00050">
    <property type="entry name" value="DISIN"/>
    <property type="match status" value="1"/>
</dbReference>
<dbReference type="SUPFAM" id="SSF57552">
    <property type="entry name" value="Blood coagulation inhibitor (disintegrin)"/>
    <property type="match status" value="1"/>
</dbReference>
<dbReference type="SUPFAM" id="SSF55486">
    <property type="entry name" value="Metalloproteases ('zincins'), catalytic domain"/>
    <property type="match status" value="1"/>
</dbReference>
<dbReference type="PROSITE" id="PS50215">
    <property type="entry name" value="ADAM_MEPRO"/>
    <property type="match status" value="1"/>
</dbReference>
<dbReference type="PROSITE" id="PS00427">
    <property type="entry name" value="DISINTEGRIN_1"/>
    <property type="match status" value="1"/>
</dbReference>
<dbReference type="PROSITE" id="PS50214">
    <property type="entry name" value="DISINTEGRIN_2"/>
    <property type="match status" value="1"/>
</dbReference>
<dbReference type="PROSITE" id="PS01186">
    <property type="entry name" value="EGF_2"/>
    <property type="match status" value="1"/>
</dbReference>
<dbReference type="PROSITE" id="PS50026">
    <property type="entry name" value="EGF_3"/>
    <property type="match status" value="1"/>
</dbReference>
<dbReference type="PROSITE" id="PS00142">
    <property type="entry name" value="ZINC_PROTEASE"/>
    <property type="match status" value="1"/>
</dbReference>
<evidence type="ECO:0000250" key="1"/>
<evidence type="ECO:0000250" key="2">
    <source>
        <dbReference type="UniProtKB" id="P78536"/>
    </source>
</evidence>
<evidence type="ECO:0000250" key="3">
    <source>
        <dbReference type="UniProtKB" id="Q9BZ11"/>
    </source>
</evidence>
<evidence type="ECO:0000255" key="4"/>
<evidence type="ECO:0000255" key="5">
    <source>
        <dbReference type="PROSITE-ProRule" id="PRU00068"/>
    </source>
</evidence>
<evidence type="ECO:0000255" key="6">
    <source>
        <dbReference type="PROSITE-ProRule" id="PRU00076"/>
    </source>
</evidence>
<evidence type="ECO:0000255" key="7">
    <source>
        <dbReference type="PROSITE-ProRule" id="PRU00276"/>
    </source>
</evidence>
<evidence type="ECO:0000255" key="8">
    <source>
        <dbReference type="PROSITE-ProRule" id="PRU10095"/>
    </source>
</evidence>
<evidence type="ECO:0000256" key="9">
    <source>
        <dbReference type="SAM" id="MobiDB-lite"/>
    </source>
</evidence>
<evidence type="ECO:0000269" key="10">
    <source>
    </source>
</evidence>
<evidence type="ECO:0000269" key="11">
    <source>
    </source>
</evidence>
<evidence type="ECO:0000269" key="12">
    <source>
    </source>
</evidence>
<evidence type="ECO:0000269" key="13">
    <source>
    </source>
</evidence>
<evidence type="ECO:0000269" key="14">
    <source>
    </source>
</evidence>
<evidence type="ECO:0000269" key="15">
    <source>
    </source>
</evidence>
<evidence type="ECO:0000269" key="16">
    <source>
    </source>
</evidence>
<evidence type="ECO:0000305" key="17"/>
<evidence type="ECO:0000305" key="18">
    <source>
    </source>
</evidence>
<evidence type="ECO:0000312" key="19">
    <source>
        <dbReference type="EMBL" id="BAC65470.1"/>
    </source>
</evidence>
<evidence type="ECO:0000312" key="20">
    <source>
        <dbReference type="MGI" id="MGI:105376"/>
    </source>
</evidence>
<sequence length="845" mass="92079">MGPRALSPLASLRLRWLLACGLLGPVLEAGRPDLEQTVHLSSYEIITPWRLTRERREALGPSSQQISYVIQAQGKQHIIHLERNTDLLPNDFVVYTYDKEGSLLSDHPNVQSHCHYRGYVEGVQNSAVAVSACFGLRGLLHLENASFGIEPLHNSSHFEHIFYPMDGIHQEPLRCGVSNRDTEKEGTQGDEEEHPSVTQLLRRRRAVLPQTRYVELFIVVDKERYDMMGRNQTAVREEMIRLANYLDSMYIMLNIRIVLVGLEIWTDRNPINIIGGAGDVLGNFVQWREKFLITRWRHDSAQLVLKKGFGGTAGMAFVGTVCSRSHAGGINVFGQITVETFASIVAHELGHNLGMNHDDGRECFCGAKSCIMNSGASGSRNFSSCSAEDFEKLTLNKGGSCLLNIPKPDEAYSAPSCGNKLVDPGEECDCGTAKECEVDPCCEGSTCKLKSFAECAYGDCCKDCQFLPGGSMCRGKTSECDVPEYCNGSSQFCPPDVFIQNGYPCQNSKAYCYNGMCQYYDAQCQVIFGSKAKAAPRDCFIEVNSKGDRFGNCGFSGSEYKKCATGNALCGKLQCENVQDMPVFGIVPAIIQTPSRGTKCWGVDFQLGSDVPDPGMVNEGTKCDAGKICRNFQCVNASVLNYDCDIQGKCHGHGVCNSNKNCHCEDGWAPPHCDTKGYGGSVDSGPTYNAKSTALRDGLLVFFFLIVPLVAAAIFLFIKRDELRKTFRKKRSQMSDGRNQANVSRQPGDPSISRPPGGPNVSRPPGGPGVSRPPGGPGVSRPPGGPGVSRPPPGHGNRFPVPTYAAKQPAQFPSRPPPPQPKISSQGNLIPARPAPAPPLYSSLT</sequence>
<gene>
    <name evidence="20" type="primary">Adam9</name>
    <name evidence="19" type="synonym">Kiaa0021</name>
    <name type="synonym">Mdc9</name>
    <name type="synonym">Mltng</name>
</gene>
<protein>
    <recommendedName>
        <fullName>Disintegrin and metalloproteinase domain-containing protein 9</fullName>
        <shortName>ADAM 9</shortName>
        <ecNumber evidence="16">3.4.24.-</ecNumber>
    </recommendedName>
    <alternativeName>
        <fullName>Meltrin-gamma</fullName>
    </alternativeName>
    <alternativeName>
        <fullName>Metalloprotease/disintegrin/cysteine-rich protein 9</fullName>
    </alternativeName>
    <alternativeName>
        <fullName>Myeloma cell metalloproteinase</fullName>
    </alternativeName>
</protein>
<reference key="1">
    <citation type="journal article" date="1996" name="J. Cell Biol.">
        <title>MDC9, a widely expressed cellular disintegrin containing cytoplasmic SH3 ligand domains.</title>
        <authorList>
            <person name="Weskamp G."/>
            <person name="Kraetzschmar J."/>
            <person name="Reid M.S."/>
            <person name="Blobel C.P."/>
        </authorList>
    </citation>
    <scope>NUCLEOTIDE SEQUENCE [MRNA]</scope>
    <source>
        <tissue>Lung</tissue>
    </source>
</reference>
<reference evidence="19" key="2">
    <citation type="journal article" date="2003" name="DNA Res.">
        <title>Prediction of the coding sequences of mouse homologues of KIAA gene: II. The complete nucleotide sequences of 400 mouse KIAA-homologous cDNAs identified by screening of terminal sequences of cDNA clones randomly sampled from size-fractionated libraries.</title>
        <authorList>
            <person name="Okazaki N."/>
            <person name="Kikuno R."/>
            <person name="Ohara R."/>
            <person name="Inamoto S."/>
            <person name="Aizawa H."/>
            <person name="Yuasa S."/>
            <person name="Nakajima D."/>
            <person name="Nagase T."/>
            <person name="Ohara O."/>
            <person name="Koga H."/>
        </authorList>
    </citation>
    <scope>NUCLEOTIDE SEQUENCE [LARGE SCALE MRNA]</scope>
    <source>
        <tissue evidence="19">Brain</tissue>
    </source>
</reference>
<reference key="3">
    <citation type="journal article" date="2009" name="PLoS Biol.">
        <title>Lineage-specific biology revealed by a finished genome assembly of the mouse.</title>
        <authorList>
            <person name="Church D.M."/>
            <person name="Goodstadt L."/>
            <person name="Hillier L.W."/>
            <person name="Zody M.C."/>
            <person name="Goldstein S."/>
            <person name="She X."/>
            <person name="Bult C.J."/>
            <person name="Agarwala R."/>
            <person name="Cherry J.L."/>
            <person name="DiCuccio M."/>
            <person name="Hlavina W."/>
            <person name="Kapustin Y."/>
            <person name="Meric P."/>
            <person name="Maglott D."/>
            <person name="Birtle Z."/>
            <person name="Marques A.C."/>
            <person name="Graves T."/>
            <person name="Zhou S."/>
            <person name="Teague B."/>
            <person name="Potamousis K."/>
            <person name="Churas C."/>
            <person name="Place M."/>
            <person name="Herschleb J."/>
            <person name="Runnheim R."/>
            <person name="Forrest D."/>
            <person name="Amos-Landgraf J."/>
            <person name="Schwartz D.C."/>
            <person name="Cheng Z."/>
            <person name="Lindblad-Toh K."/>
            <person name="Eichler E.E."/>
            <person name="Ponting C.P."/>
        </authorList>
    </citation>
    <scope>NUCLEOTIDE SEQUENCE [LARGE SCALE GENOMIC DNA]</scope>
    <source>
        <strain>C57BL/6J</strain>
    </source>
</reference>
<reference key="4">
    <citation type="journal article" date="2004" name="Genome Res.">
        <title>The status, quality, and expansion of the NIH full-length cDNA project: the Mammalian Gene Collection (MGC).</title>
        <authorList>
            <consortium name="The MGC Project Team"/>
        </authorList>
    </citation>
    <scope>NUCLEOTIDE SEQUENCE [LARGE SCALE MRNA]</scope>
    <source>
        <strain>FVB/N-3</strain>
        <tissue>Mammary gland</tissue>
    </source>
</reference>
<reference key="5">
    <citation type="journal article" date="1995" name="Nature">
        <title>A metalloprotease-disintegrin participating in myoblast fusion.</title>
        <authorList>
            <person name="Yagami-Hiromasa T."/>
            <person name="Sato T."/>
            <person name="Kurisaki T."/>
            <person name="Kamijo K."/>
            <person name="Nabeshima Y."/>
            <person name="Fujisawa-Sehara A."/>
        </authorList>
    </citation>
    <scope>NUCLEOTIDE SEQUENCE [MRNA] OF 426-575</scope>
</reference>
<reference key="6">
    <citation type="journal article" date="1994" name="Proc. Natl. Acad. Sci. U.S.A.">
        <title>A family of cellular proteins related to snake venom disintegrins.</title>
        <authorList>
            <person name="Weskamp G."/>
            <person name="Blobel C.P."/>
        </authorList>
    </citation>
    <scope>NUCLEOTIDE SEQUENCE [MRNA] OF 432-478</scope>
    <source>
        <strain>BALB/cJ</strain>
    </source>
</reference>
<reference key="7">
    <citation type="journal article" date="1999" name="J. Biol. Chem.">
        <title>Metalloprotease-disintegrin MDC9: intracellular maturation and catalytic activity.</title>
        <authorList>
            <person name="Roghani M."/>
            <person name="Becherer J.D."/>
            <person name="Moss M.L."/>
            <person name="Atherton R.E."/>
            <person name="Erdjument-Bromage H."/>
            <person name="Arribas J."/>
            <person name="Blackburn R.K."/>
            <person name="Weskamp G."/>
            <person name="Tempst P."/>
            <person name="Blobel C.P."/>
        </authorList>
    </citation>
    <scope>FUNCTION</scope>
    <scope>CATALYTIC ACTIVITY</scope>
    <scope>PHOSPHORYLATION</scope>
    <scope>ACTIVITY REGULATION</scope>
    <scope>PROTEIN SEQUENCE OF 206-212</scope>
</reference>
<reference key="8">
    <citation type="journal article" date="1999" name="J. Biol. Chem.">
        <title>Interaction of the metalloprotease disintegrins MDC9 and MDC15 with two SH3 domain-containing proteins, endophilin I and SH3PX1.</title>
        <authorList>
            <person name="Howard L."/>
            <person name="Nelson K.K."/>
            <person name="Maciewicz R.A."/>
            <person name="Blobel C.P."/>
        </authorList>
    </citation>
    <scope>INTERACTION WITH SH3GL2 AND SNX9</scope>
</reference>
<reference key="9">
    <citation type="journal article" date="2000" name="J. Cell Sci.">
        <title>Meltrin gamma(ADAM-9) mediates cellular adhesion through alpha(6)beta(1)integrin, leading to a marked induction of fibroblast cell motility.</title>
        <authorList>
            <person name="Nath D."/>
            <person name="Slocombe P.M."/>
            <person name="Webster A."/>
            <person name="Stephens P.E."/>
            <person name="Docherty A.J."/>
            <person name="Murphy G."/>
        </authorList>
    </citation>
    <scope>FUNCTION</scope>
    <scope>INTERACTION WITH ITGA6</scope>
</reference>
<reference key="10">
    <citation type="journal article" date="2002" name="Mol. Cell. Biol.">
        <title>Mice lacking the metalloprotease-disintegrin MDC9 (ADAM9) have no evident major abnormalities during development or adult life.</title>
        <authorList>
            <person name="Weskamp G."/>
            <person name="Cai H."/>
            <person name="Brodie T.A."/>
            <person name="Higashyama S."/>
            <person name="Manova K."/>
            <person name="Ludwig T."/>
            <person name="Blobel C.P."/>
        </authorList>
    </citation>
    <scope>DISRUPTION PHENOTYPE</scope>
</reference>
<reference key="11">
    <citation type="journal article" date="2009" name="Am. J. Hum. Genet.">
        <title>Loss of the metalloprotease ADAM9 leads to cone-rod dystrophy in humans and retinal degeneration in mice.</title>
        <authorList>
            <person name="Parry D.A."/>
            <person name="Toomes C."/>
            <person name="Bida L."/>
            <person name="Danciger M."/>
            <person name="Towns K.V."/>
            <person name="McKibbin M."/>
            <person name="Jacobson S.G."/>
            <person name="Logan C.V."/>
            <person name="Ali M."/>
            <person name="Bond J."/>
            <person name="Chance R."/>
            <person name="Swendeman S."/>
            <person name="Daniele L.L."/>
            <person name="Springell K."/>
            <person name="Adams M."/>
            <person name="Johnson C.A."/>
            <person name="Booth A.P."/>
            <person name="Jafri H."/>
            <person name="Rashid Y."/>
            <person name="Banin E."/>
            <person name="Strom T.M."/>
            <person name="Farber D.B."/>
            <person name="Sharon D."/>
            <person name="Blobel C.P."/>
            <person name="Pugh E.N. Jr."/>
            <person name="Pierce E.A."/>
            <person name="Inglehearn C.F."/>
        </authorList>
    </citation>
    <scope>DISRUPTION PHENOTYPE</scope>
</reference>
<reference key="12">
    <citation type="journal article" date="2009" name="Mol. Cell. Biol.">
        <title>ADAM9 is involved in pathological retinal neovascularization.</title>
        <authorList>
            <person name="Guaiquil V."/>
            <person name="Swendeman S."/>
            <person name="Yoshida T."/>
            <person name="Chavala S."/>
            <person name="Campochiaro P.A."/>
            <person name="Blobel C.P."/>
        </authorList>
    </citation>
    <scope>FUNCTION</scope>
    <scope>MUTAGENESIS OF GLU-348</scope>
</reference>
<reference key="13">
    <citation type="journal article" date="2010" name="Cell">
        <title>A tissue-specific atlas of mouse protein phosphorylation and expression.</title>
        <authorList>
            <person name="Huttlin E.L."/>
            <person name="Jedrychowski M.P."/>
            <person name="Elias J.E."/>
            <person name="Goswami T."/>
            <person name="Rad R."/>
            <person name="Beausoleil S.A."/>
            <person name="Villen J."/>
            <person name="Haas W."/>
            <person name="Sowa M.E."/>
            <person name="Gygi S.P."/>
        </authorList>
    </citation>
    <scope>IDENTIFICATION BY MASS SPECTROMETRY [LARGE SCALE ANALYSIS]</scope>
    <source>
        <tissue>Kidney</tissue>
        <tissue>Testis</tissue>
    </source>
</reference>
<reference key="14">
    <citation type="journal article" date="2015" name="J. Biol. Chem.">
        <title>The functional maturation of a disintegrin and metalloproteinase (ADAM) 9, 10, and 17 requires processing at a newly identified proprotein convertase (PC) cleavage site.</title>
        <authorList>
            <person name="Wong E."/>
            <person name="Maretzky T."/>
            <person name="Peleg Y."/>
            <person name="Blobel C.P."/>
            <person name="Sagi I."/>
        </authorList>
    </citation>
    <scope>MUTAGENESIS OF ARG-53; ARG-56; ARG-202 AND ARG-205</scope>
    <scope>SUBCELLULAR LOCATION</scope>
    <scope>ACTIVITY REGULATION</scope>
</reference>
<accession>Q61072</accession>
<accession>E9QPP2</accession>
<accession>Q60618</accession>
<accession>Q61853</accession>
<accession>Q80U94</accession>
<feature type="signal peptide" evidence="4">
    <location>
        <begin position="1"/>
        <end position="29"/>
    </location>
</feature>
<feature type="chain" id="PRO_0000029063" description="Disintegrin and metalloproteinase domain-containing protein 9">
    <location>
        <begin position="30"/>
        <end position="845"/>
    </location>
</feature>
<feature type="topological domain" description="Extracellular" evidence="4">
    <location>
        <begin position="30"/>
        <end position="697"/>
    </location>
</feature>
<feature type="transmembrane region" description="Helical" evidence="4">
    <location>
        <begin position="698"/>
        <end position="718"/>
    </location>
</feature>
<feature type="topological domain" description="Cytoplasmic" evidence="4">
    <location>
        <begin position="719"/>
        <end position="845"/>
    </location>
</feature>
<feature type="domain" description="Peptidase M12B" evidence="7">
    <location>
        <begin position="212"/>
        <end position="406"/>
    </location>
</feature>
<feature type="domain" description="Disintegrin" evidence="5">
    <location>
        <begin position="414"/>
        <end position="501"/>
    </location>
</feature>
<feature type="domain" description="EGF-like" evidence="6">
    <location>
        <begin position="644"/>
        <end position="698"/>
    </location>
</feature>
<feature type="region of interest" description="Disordered" evidence="9">
    <location>
        <begin position="729"/>
        <end position="845"/>
    </location>
</feature>
<feature type="compositionally biased region" description="Polar residues" evidence="9">
    <location>
        <begin position="734"/>
        <end position="745"/>
    </location>
</feature>
<feature type="compositionally biased region" description="Pro residues" evidence="9">
    <location>
        <begin position="783"/>
        <end position="794"/>
    </location>
</feature>
<feature type="active site" evidence="2 7 8">
    <location>
        <position position="348"/>
    </location>
</feature>
<feature type="binding site" evidence="1">
    <location>
        <position position="347"/>
    </location>
    <ligand>
        <name>Zn(2+)</name>
        <dbReference type="ChEBI" id="CHEBI:29105"/>
        <note>catalytic</note>
    </ligand>
</feature>
<feature type="binding site" evidence="1">
    <location>
        <position position="351"/>
    </location>
    <ligand>
        <name>Zn(2+)</name>
        <dbReference type="ChEBI" id="CHEBI:29105"/>
        <note>catalytic</note>
    </ligand>
</feature>
<feature type="binding site" evidence="1">
    <location>
        <position position="357"/>
    </location>
    <ligand>
        <name>Zn(2+)</name>
        <dbReference type="ChEBI" id="CHEBI:29105"/>
        <note>catalytic</note>
    </ligand>
</feature>
<feature type="site" description="Cleavage" evidence="18">
    <location>
        <begin position="56"/>
        <end position="57"/>
    </location>
</feature>
<feature type="site" description="Cleavage; by furin-like protease" evidence="16">
    <location>
        <begin position="205"/>
        <end position="206"/>
    </location>
</feature>
<feature type="glycosylation site" description="N-linked (GlcNAc...) asparagine" evidence="4">
    <location>
        <position position="144"/>
    </location>
</feature>
<feature type="glycosylation site" description="N-linked (GlcNAc...) asparagine" evidence="4">
    <location>
        <position position="154"/>
    </location>
</feature>
<feature type="glycosylation site" description="N-linked (GlcNAc...) asparagine" evidence="4">
    <location>
        <position position="231"/>
    </location>
</feature>
<feature type="glycosylation site" description="N-linked (GlcNAc...) asparagine" evidence="4">
    <location>
        <position position="381"/>
    </location>
</feature>
<feature type="glycosylation site" description="N-linked (GlcNAc...) asparagine" evidence="4">
    <location>
        <position position="487"/>
    </location>
</feature>
<feature type="glycosylation site" description="N-linked (GlcNAc...) asparagine" evidence="4">
    <location>
        <position position="636"/>
    </location>
</feature>
<feature type="disulfide bond" evidence="1">
    <location>
        <begin position="322"/>
        <end position="401"/>
    </location>
</feature>
<feature type="disulfide bond" evidence="2">
    <location>
        <begin position="363"/>
        <end position="385"/>
    </location>
</feature>
<feature type="disulfide bond" evidence="1">
    <location>
        <begin position="365"/>
        <end position="370"/>
    </location>
</feature>
<feature type="disulfide bond" evidence="1">
    <location>
        <begin position="473"/>
        <end position="493"/>
    </location>
</feature>
<feature type="disulfide bond" evidence="1">
    <location>
        <begin position="644"/>
        <end position="656"/>
    </location>
</feature>
<feature type="disulfide bond" evidence="1">
    <location>
        <begin position="650"/>
        <end position="662"/>
    </location>
</feature>
<feature type="disulfide bond" evidence="1">
    <location>
        <begin position="664"/>
        <end position="673"/>
    </location>
</feature>
<feature type="mutagenesis site" description="Reduces the shedding activity; when associated with A-56. Does not prevent pro-domain processing between the pro- and metalloprotease domain; when associated with A-56." evidence="15">
    <original>R</original>
    <variation>A</variation>
    <location>
        <position position="53"/>
    </location>
</feature>
<feature type="mutagenesis site" description="Reduces the shedding activity; when associated with A-56. Does not prevent pro-domain processing between the pro- and metalloprotease domain; when associated with A-56." evidence="15">
    <original>R</original>
    <variation>A</variation>
    <location>
        <position position="56"/>
    </location>
</feature>
<feature type="mutagenesis site" description="Does not affect shedding activity; when associated with A-205." evidence="15">
    <original>R</original>
    <variation>A</variation>
    <location>
        <position position="202"/>
    </location>
</feature>
<feature type="mutagenesis site" description="Does not affect shedding activity; when associated with A-203." evidence="15">
    <original>R</original>
    <variation>A</variation>
    <location>
        <position position="205"/>
    </location>
</feature>
<feature type="mutagenesis site" description="Abolishes catalytic activity." evidence="13">
    <original>E</original>
    <variation>A</variation>
    <location>
        <position position="348"/>
    </location>
</feature>
<feature type="sequence conflict" description="In Ref. 1; AAC52446, 2; BAC65470 and 4; AAH47156." evidence="17" ref="1 2 4">
    <original>W</original>
    <variation>R</variation>
    <location>
        <position position="296"/>
    </location>
</feature>
<comment type="function">
    <text evidence="11 13 16">Metalloprotease that cleaves and releases a number of molecules with important roles in tumorigenesis and angiogenesis, such as TEK, KDR, EPHB4, CD40, VCAM1 and CDH5 (PubMed:19273593, PubMed:9920899). May mediate cell-cell, cell-matrix interactions and regulate the motility of cells via interactions with integrins (PubMed:10825303).</text>
</comment>
<comment type="cofactor">
    <cofactor evidence="3">
        <name>Zn(2+)</name>
        <dbReference type="ChEBI" id="CHEBI:29105"/>
    </cofactor>
    <text evidence="3">Binds 1 zinc ion per subunit.</text>
</comment>
<comment type="activity regulation">
    <text evidence="15 16">Synthesized as an inactive form which is proteolytically cleaved to generate an active enzyme. Processing at the upstream site is particularly important for activation of the proenzyme, whereas processing at the boundary between the pro-domain and the catalytic domain does not appear to be essential (PubMed:25795784). Inhibited by hydroxamic acid-based inhibitors (PubMed:9920899).</text>
</comment>
<comment type="subunit">
    <text evidence="10 11">Interacts with SH3GL2 and SNX9 through its cytoplasmic tail (PubMed:10531379). Interacts with ITGA6 (PubMed:10825303).</text>
</comment>
<comment type="subcellular location">
    <subcellularLocation>
        <location evidence="15 17">Cell membrane</location>
        <topology evidence="17">Single-pass type I membrane protein</topology>
    </subcellularLocation>
</comment>
<comment type="PTM">
    <text evidence="15 16">Proteolytically cleaved in the trans-Golgi network before it reaches the plasma membrane to generate a mature protein. The removal of the pro-domain occurs via cleavage at two different sites. Processed most likely by a pro-protein convertase such as furin, at the boundary between the pro-domain and the catalytic domain. An additional upstream cleavage pro-protein convertase site (Arg-56/Glu-57) has an important role in the activation of ADAM9.</text>
</comment>
<comment type="PTM">
    <text evidence="16">Phosphorylation is induced in vitro by phorbol-12-myristate-13-acetate (PMA) (PubMed:9920899).</text>
</comment>
<comment type="disruption phenotype">
    <text evidence="12 14">Deficient mice appear to develop normally, are viable and fertile, and do not have any major pathological phenotypes (PubMed:11839819). In adulthood, 20 months after birth, mice display progressive retinal degeneration, disorganized retinal layers and a degenerate retinal pigment epithelium (PubMed:19409519).</text>
</comment>
<comment type="sequence caution" evidence="17">
    <conflict type="erroneous initiation">
        <sequence resource="EMBL-CDS" id="BAC65470"/>
    </conflict>
    <text>Extended N-terminus.</text>
</comment>